<sequence>MDEDGLELQQQAPNSFFDATGAGATHMDGNQIVVEVQETVYVSDVVDSDITVHNYVPDDPDSVVIQDVIEDVVIEDVQCTDIMDEADVSETVIIPEQVLDSDVTEEVSLTHCTVPDDVLASDITSASISMPEHVLTSESIHVSDVGHVEHVVHDSVVEAEIVTDPLAADVVSEEVLVADCASEAVIDANGIPVNQQDEEKNNCEDYLMISLDDAGKIEHDGSSGLTMDNETEIDPCKVDGTCPEVIKVYIFKADPGEDDLGGTVDIVESEPENEHGVELLDPNNSIRVPREKMVYMAVNDSQQEEEELNVAEIADEVYMEVIVGEEDAAAAAAAAVHEQQVEDNEMKTFMPIAWAAAYGNNSDGIENRNGTASALLHIDESAGLGRLAKQKPKKRRRPDSRQYQTAIIIGPDGHPLTVYPCMICGKKFKSRGFLKRHMKNHPEHLAKKKYRCTDCDYTTNKKISLHNHLESHKLTSKAEKAIECDECGKHFSHAGALFTHKMVHKEKGANKMHKCKFCEYETAEQGLLNRHLLAVHSKNFPHICVECGKGFRHPSELKKHMRIHTGEKPYECQYCEYRSADSSNLKTHVKTKHSKEMPFKCDICLLTFSDTKEVQQHALVHQESKTHQCLHCDHKSSNSSDLKRHIISVHTKDYPHKCDMCDKGFHRPSELKKHVAAHKGKKMHQCRHCDFKIADPFVLSRHILSVHTKDLPFRCKRCRKGFRQQSELKKHMKTHSGRKVYQCEYCEYSTTDASGFKRHVISIHTKDYPHRCEYCKKGFRRPSEKNQHIMRHHKEVGLP</sequence>
<evidence type="ECO:0000250" key="1">
    <source>
        <dbReference type="UniProtKB" id="P17010"/>
    </source>
</evidence>
<evidence type="ECO:0000255" key="2">
    <source>
        <dbReference type="PROSITE-ProRule" id="PRU00042"/>
    </source>
</evidence>
<evidence type="ECO:0000305" key="3"/>
<evidence type="ECO:0007744" key="4">
    <source>
    </source>
</evidence>
<evidence type="ECO:0007744" key="5">
    <source>
    </source>
</evidence>
<accession>P17012</accession>
<accession>P17011</accession>
<keyword id="KW-0010">Activator</keyword>
<keyword id="KW-0238">DNA-binding</keyword>
<keyword id="KW-0479">Metal-binding</keyword>
<keyword id="KW-0539">Nucleus</keyword>
<keyword id="KW-0597">Phosphoprotein</keyword>
<keyword id="KW-1185">Reference proteome</keyword>
<keyword id="KW-0677">Repeat</keyword>
<keyword id="KW-0804">Transcription</keyword>
<keyword id="KW-0805">Transcription regulation</keyword>
<keyword id="KW-0862">Zinc</keyword>
<keyword id="KW-0863">Zinc-finger</keyword>
<name>ZFX_MOUSE</name>
<dbReference type="EMBL" id="M32308">
    <property type="protein sequence ID" value="AAA40584.1"/>
    <property type="molecule type" value="mRNA"/>
</dbReference>
<dbReference type="EMBL" id="M32309">
    <property type="protein sequence ID" value="AAA40585.1"/>
    <property type="status" value="ALT_SEQ"/>
    <property type="molecule type" value="mRNA"/>
</dbReference>
<dbReference type="EMBL" id="L19714">
    <property type="protein sequence ID" value="AAA75393.1"/>
    <property type="molecule type" value="mRNA"/>
</dbReference>
<dbReference type="CCDS" id="CCDS30276.1"/>
<dbReference type="PIR" id="A34729">
    <property type="entry name" value="A34729"/>
</dbReference>
<dbReference type="RefSeq" id="NP_001037851.1">
    <property type="nucleotide sequence ID" value="NM_001044386.1"/>
</dbReference>
<dbReference type="RefSeq" id="NP_001345285.1">
    <property type="nucleotide sequence ID" value="NM_001358356.2"/>
</dbReference>
<dbReference type="RefSeq" id="NP_001413018.1">
    <property type="nucleotide sequence ID" value="NM_001426089.1"/>
</dbReference>
<dbReference type="RefSeq" id="NP_001413021.1">
    <property type="nucleotide sequence ID" value="NM_001426092.1"/>
</dbReference>
<dbReference type="RefSeq" id="NP_001413022.1">
    <property type="nucleotide sequence ID" value="NM_001426093.1"/>
</dbReference>
<dbReference type="RefSeq" id="NP_001413023.1">
    <property type="nucleotide sequence ID" value="NM_001426094.1"/>
</dbReference>
<dbReference type="RefSeq" id="NP_001413024.1">
    <property type="nucleotide sequence ID" value="NM_001426095.1"/>
</dbReference>
<dbReference type="RefSeq" id="NP_001413025.1">
    <property type="nucleotide sequence ID" value="NM_001426096.1"/>
</dbReference>
<dbReference type="RefSeq" id="NP_001413032.1">
    <property type="nucleotide sequence ID" value="NM_001426103.1"/>
</dbReference>
<dbReference type="RefSeq" id="NP_035898.2">
    <property type="nucleotide sequence ID" value="NM_011768.2"/>
</dbReference>
<dbReference type="RefSeq" id="XP_006528029.1">
    <property type="nucleotide sequence ID" value="XM_006527966.3"/>
</dbReference>
<dbReference type="RefSeq" id="XP_011245879.1">
    <property type="nucleotide sequence ID" value="XM_011247577.2"/>
</dbReference>
<dbReference type="RefSeq" id="XP_011245880.1">
    <property type="nucleotide sequence ID" value="XM_011247578.2"/>
</dbReference>
<dbReference type="SMR" id="P17012"/>
<dbReference type="BioGRID" id="204690">
    <property type="interactions" value="2"/>
</dbReference>
<dbReference type="FunCoup" id="P17012">
    <property type="interactions" value="2914"/>
</dbReference>
<dbReference type="IntAct" id="P17012">
    <property type="interactions" value="2"/>
</dbReference>
<dbReference type="MINT" id="P17012"/>
<dbReference type="STRING" id="10090.ENSMUSP00000085423"/>
<dbReference type="iPTMnet" id="P17012"/>
<dbReference type="PhosphoSitePlus" id="P17012"/>
<dbReference type="PaxDb" id="10090-ENSMUSP00000085423"/>
<dbReference type="ProteomicsDB" id="299552"/>
<dbReference type="Pumba" id="P17012"/>
<dbReference type="Antibodypedia" id="577">
    <property type="antibodies" value="171 antibodies from 29 providers"/>
</dbReference>
<dbReference type="DNASU" id="22764"/>
<dbReference type="Ensembl" id="ENSMUST00000088102.12">
    <property type="protein sequence ID" value="ENSMUSP00000085423.6"/>
    <property type="gene ID" value="ENSMUSG00000079509.11"/>
</dbReference>
<dbReference type="Ensembl" id="ENSMUST00000113926.8">
    <property type="protein sequence ID" value="ENSMUSP00000109559.2"/>
    <property type="gene ID" value="ENSMUSG00000079509.11"/>
</dbReference>
<dbReference type="Ensembl" id="ENSMUST00000113927.8">
    <property type="protein sequence ID" value="ENSMUSP00000109560.2"/>
    <property type="gene ID" value="ENSMUSG00000079509.11"/>
</dbReference>
<dbReference type="GeneID" id="22764"/>
<dbReference type="KEGG" id="mmu:22764"/>
<dbReference type="UCSC" id="uc009tsz.1">
    <property type="organism name" value="mouse"/>
</dbReference>
<dbReference type="AGR" id="MGI:99211"/>
<dbReference type="CTD" id="7543"/>
<dbReference type="MGI" id="MGI:99211">
    <property type="gene designation" value="Zfx"/>
</dbReference>
<dbReference type="VEuPathDB" id="HostDB:ENSMUSG00000079509"/>
<dbReference type="eggNOG" id="KOG1721">
    <property type="taxonomic scope" value="Eukaryota"/>
</dbReference>
<dbReference type="GeneTree" id="ENSGT00940000158684"/>
<dbReference type="HOGENOM" id="CLU_021097_0_0_1"/>
<dbReference type="InParanoid" id="P17012"/>
<dbReference type="OMA" id="PDIEHME"/>
<dbReference type="OrthoDB" id="3561125at2759"/>
<dbReference type="PhylomeDB" id="P17012"/>
<dbReference type="TreeFam" id="TF335557"/>
<dbReference type="BioGRID-ORCS" id="22764">
    <property type="hits" value="14 hits in 76 CRISPR screens"/>
</dbReference>
<dbReference type="ChiTaRS" id="Zfx">
    <property type="organism name" value="mouse"/>
</dbReference>
<dbReference type="PRO" id="PR:P17012"/>
<dbReference type="Proteomes" id="UP000000589">
    <property type="component" value="Chromosome X"/>
</dbReference>
<dbReference type="RNAct" id="P17012">
    <property type="molecule type" value="protein"/>
</dbReference>
<dbReference type="Bgee" id="ENSMUSG00000079509">
    <property type="expression patterns" value="Expressed in metanephric mesenchyme and 255 other cell types or tissues"/>
</dbReference>
<dbReference type="ExpressionAtlas" id="P17012">
    <property type="expression patterns" value="baseline and differential"/>
</dbReference>
<dbReference type="GO" id="GO:0005730">
    <property type="term" value="C:nucleolus"/>
    <property type="evidence" value="ECO:0007669"/>
    <property type="project" value="Ensembl"/>
</dbReference>
<dbReference type="GO" id="GO:0005654">
    <property type="term" value="C:nucleoplasm"/>
    <property type="evidence" value="ECO:0007669"/>
    <property type="project" value="Ensembl"/>
</dbReference>
<dbReference type="GO" id="GO:0003677">
    <property type="term" value="F:DNA binding"/>
    <property type="evidence" value="ECO:0007669"/>
    <property type="project" value="UniProtKB-KW"/>
</dbReference>
<dbReference type="GO" id="GO:0001228">
    <property type="term" value="F:DNA-binding transcription activator activity, RNA polymerase II-specific"/>
    <property type="evidence" value="ECO:0000250"/>
    <property type="project" value="UniProtKB"/>
</dbReference>
<dbReference type="GO" id="GO:0008270">
    <property type="term" value="F:zinc ion binding"/>
    <property type="evidence" value="ECO:0007669"/>
    <property type="project" value="UniProtKB-KW"/>
</dbReference>
<dbReference type="GO" id="GO:0009566">
    <property type="term" value="P:fertilization"/>
    <property type="evidence" value="ECO:0000315"/>
    <property type="project" value="MGI"/>
</dbReference>
<dbReference type="GO" id="GO:0007281">
    <property type="term" value="P:germ cell development"/>
    <property type="evidence" value="ECO:0000315"/>
    <property type="project" value="MGI"/>
</dbReference>
<dbReference type="GO" id="GO:0048872">
    <property type="term" value="P:homeostasis of number of cells"/>
    <property type="evidence" value="ECO:0000315"/>
    <property type="project" value="MGI"/>
</dbReference>
<dbReference type="GO" id="GO:0035264">
    <property type="term" value="P:multicellular organism growth"/>
    <property type="evidence" value="ECO:0000315"/>
    <property type="project" value="MGI"/>
</dbReference>
<dbReference type="GO" id="GO:0048599">
    <property type="term" value="P:oocyte development"/>
    <property type="evidence" value="ECO:0000315"/>
    <property type="project" value="MGI"/>
</dbReference>
<dbReference type="GO" id="GO:0001541">
    <property type="term" value="P:ovarian follicle development"/>
    <property type="evidence" value="ECO:0000315"/>
    <property type="project" value="MGI"/>
</dbReference>
<dbReference type="GO" id="GO:0060746">
    <property type="term" value="P:parental behavior"/>
    <property type="evidence" value="ECO:0000315"/>
    <property type="project" value="MGI"/>
</dbReference>
<dbReference type="GO" id="GO:0009791">
    <property type="term" value="P:post-embryonic development"/>
    <property type="evidence" value="ECO:0000315"/>
    <property type="project" value="MGI"/>
</dbReference>
<dbReference type="GO" id="GO:0007283">
    <property type="term" value="P:spermatogenesis"/>
    <property type="evidence" value="ECO:0000315"/>
    <property type="project" value="MGI"/>
</dbReference>
<dbReference type="FunFam" id="3.30.160.60:FF:000054">
    <property type="entry name" value="Zinc finger protein 711"/>
    <property type="match status" value="1"/>
</dbReference>
<dbReference type="FunFam" id="3.30.160.60:FF:000209">
    <property type="entry name" value="Zinc finger protein 711"/>
    <property type="match status" value="3"/>
</dbReference>
<dbReference type="FunFam" id="3.30.160.60:FF:000170">
    <property type="entry name" value="Zinc finger protein 711 isoform X2"/>
    <property type="match status" value="1"/>
</dbReference>
<dbReference type="FunFam" id="3.30.160.60:FF:000607">
    <property type="entry name" value="zinc finger X-chromosomal protein-like isoform X1"/>
    <property type="match status" value="1"/>
</dbReference>
<dbReference type="FunFam" id="3.30.160.60:FF:000461">
    <property type="entry name" value="Zinc finger X-chromosomal protein-like protein"/>
    <property type="match status" value="1"/>
</dbReference>
<dbReference type="Gene3D" id="3.30.160.60">
    <property type="entry name" value="Classic Zinc Finger"/>
    <property type="match status" value="8"/>
</dbReference>
<dbReference type="InterPro" id="IPR006794">
    <property type="entry name" value="Transcrp_activ_Zfx/Zfy-dom"/>
</dbReference>
<dbReference type="InterPro" id="IPR036236">
    <property type="entry name" value="Znf_C2H2_sf"/>
</dbReference>
<dbReference type="InterPro" id="IPR013087">
    <property type="entry name" value="Znf_C2H2_type"/>
</dbReference>
<dbReference type="PANTHER" id="PTHR24381:SF393">
    <property type="entry name" value="CHROMATIN-LINKED ADAPTOR FOR MSL PROTEINS, ISOFORM B"/>
    <property type="match status" value="1"/>
</dbReference>
<dbReference type="PANTHER" id="PTHR24381">
    <property type="entry name" value="ZINC FINGER PROTEIN"/>
    <property type="match status" value="1"/>
</dbReference>
<dbReference type="Pfam" id="PF00096">
    <property type="entry name" value="zf-C2H2"/>
    <property type="match status" value="8"/>
</dbReference>
<dbReference type="Pfam" id="PF04704">
    <property type="entry name" value="Zfx_Zfy_act"/>
    <property type="match status" value="1"/>
</dbReference>
<dbReference type="SMART" id="SM00355">
    <property type="entry name" value="ZnF_C2H2"/>
    <property type="match status" value="13"/>
</dbReference>
<dbReference type="SUPFAM" id="SSF57667">
    <property type="entry name" value="beta-beta-alpha zinc fingers"/>
    <property type="match status" value="6"/>
</dbReference>
<dbReference type="PROSITE" id="PS00028">
    <property type="entry name" value="ZINC_FINGER_C2H2_1"/>
    <property type="match status" value="8"/>
</dbReference>
<dbReference type="PROSITE" id="PS50157">
    <property type="entry name" value="ZINC_FINGER_C2H2_2"/>
    <property type="match status" value="13"/>
</dbReference>
<comment type="function">
    <text evidence="1">Probable transcriptional activator.</text>
</comment>
<comment type="subcellular location">
    <subcellularLocation>
        <location>Nucleus</location>
    </subcellularLocation>
</comment>
<comment type="similarity">
    <text evidence="3">Belongs to the krueppel C2H2-type zinc-finger protein family. ZFX/ZFY subfamily.</text>
</comment>
<comment type="sequence caution" evidence="3">
    <conflict type="miscellaneous discrepancy">
        <sequence resource="EMBL-CDS" id="AAA40585"/>
    </conflict>
    <text>The sequence differs from that shown due to a duplication of 120 bp after position 480.</text>
</comment>
<protein>
    <recommendedName>
        <fullName>Zinc finger X-chromosomal protein</fullName>
    </recommendedName>
</protein>
<proteinExistence type="evidence at protein level"/>
<reference key="1">
    <citation type="journal article" date="1990" name="Mol. Cell. Biol.">
        <title>Mouse Zfx protein is similar to Zfy-2: each contains an acidic activating domain and 13 zinc fingers.</title>
        <authorList>
            <person name="Mardon G."/>
            <person name="Luoh S.-W."/>
            <person name="Simpson E.M."/>
            <person name="Gill G."/>
            <person name="Brown L.G."/>
            <person name="Page D.C."/>
        </authorList>
    </citation>
    <scope>NUCLEOTIDE SEQUENCE [MRNA]</scope>
</reference>
<reference key="2">
    <citation type="journal article" date="1994" name="Genomics">
        <title>The structure of the Zfx gene on the mouse X chromosome.</title>
        <authorList>
            <person name="Luoh S.-W."/>
            <person name="Page D.C."/>
        </authorList>
    </citation>
    <scope>NUCLEOTIDE SEQUENCE [MRNA] OF 1-216</scope>
    <source>
        <strain>FVB/N</strain>
        <tissue>Testis</tissue>
    </source>
</reference>
<reference key="3">
    <citation type="journal article" date="2009" name="Immunity">
        <title>The phagosomal proteome in interferon-gamma-activated macrophages.</title>
        <authorList>
            <person name="Trost M."/>
            <person name="English L."/>
            <person name="Lemieux S."/>
            <person name="Courcelles M."/>
            <person name="Desjardins M."/>
            <person name="Thibault P."/>
        </authorList>
    </citation>
    <scope>PHOSPHORYLATION [LARGE SCALE ANALYSIS] AT SER-269</scope>
    <scope>IDENTIFICATION BY MASS SPECTROMETRY [LARGE SCALE ANALYSIS]</scope>
</reference>
<reference key="4">
    <citation type="journal article" date="2010" name="Cell">
        <title>A tissue-specific atlas of mouse protein phosphorylation and expression.</title>
        <authorList>
            <person name="Huttlin E.L."/>
            <person name="Jedrychowski M.P."/>
            <person name="Elias J.E."/>
            <person name="Goswami T."/>
            <person name="Rad R."/>
            <person name="Beausoleil S.A."/>
            <person name="Villen J."/>
            <person name="Haas W."/>
            <person name="Sowa M.E."/>
            <person name="Gygi S.P."/>
        </authorList>
    </citation>
    <scope>PHOSPHORYLATION [LARGE SCALE ANALYSIS] AT SER-269</scope>
    <scope>IDENTIFICATION BY MASS SPECTROMETRY [LARGE SCALE ANALYSIS]</scope>
    <source>
        <tissue>Kidney</tissue>
        <tissue>Lung</tissue>
        <tissue>Pancreas</tissue>
        <tissue>Spleen</tissue>
    </source>
</reference>
<organism>
    <name type="scientific">Mus musculus</name>
    <name type="common">Mouse</name>
    <dbReference type="NCBI Taxonomy" id="10090"/>
    <lineage>
        <taxon>Eukaryota</taxon>
        <taxon>Metazoa</taxon>
        <taxon>Chordata</taxon>
        <taxon>Craniata</taxon>
        <taxon>Vertebrata</taxon>
        <taxon>Euteleostomi</taxon>
        <taxon>Mammalia</taxon>
        <taxon>Eutheria</taxon>
        <taxon>Euarchontoglires</taxon>
        <taxon>Glires</taxon>
        <taxon>Rodentia</taxon>
        <taxon>Myomorpha</taxon>
        <taxon>Muroidea</taxon>
        <taxon>Muridae</taxon>
        <taxon>Murinae</taxon>
        <taxon>Mus</taxon>
        <taxon>Mus</taxon>
    </lineage>
</organism>
<feature type="chain" id="PRO_0000047259" description="Zinc finger X-chromosomal protein">
    <location>
        <begin position="1"/>
        <end position="799"/>
    </location>
</feature>
<feature type="zinc finger region" description="C2H2-type 1" evidence="2">
    <location>
        <begin position="419"/>
        <end position="444"/>
    </location>
</feature>
<feature type="zinc finger region" description="C2H2-type 2" evidence="2">
    <location>
        <begin position="450"/>
        <end position="472"/>
    </location>
</feature>
<feature type="zinc finger region" description="C2H2-type 3" evidence="2">
    <location>
        <begin position="482"/>
        <end position="504"/>
    </location>
</feature>
<feature type="zinc finger region" description="C2H2-type 4" evidence="2">
    <location>
        <begin position="513"/>
        <end position="536"/>
    </location>
</feature>
<feature type="zinc finger region" description="C2H2-type 5" evidence="2">
    <location>
        <begin position="542"/>
        <end position="564"/>
    </location>
</feature>
<feature type="zinc finger region" description="C2H2-type 6" evidence="2">
    <location>
        <begin position="570"/>
        <end position="593"/>
    </location>
</feature>
<feature type="zinc finger region" description="C2H2-type 7" evidence="2">
    <location>
        <begin position="599"/>
        <end position="621"/>
    </location>
</feature>
<feature type="zinc finger region" description="C2H2-type 8" evidence="2">
    <location>
        <begin position="627"/>
        <end position="650"/>
    </location>
</feature>
<feature type="zinc finger region" description="C2H2-type 9" evidence="2">
    <location>
        <begin position="656"/>
        <end position="678"/>
    </location>
</feature>
<feature type="zinc finger region" description="C2H2-type 10" evidence="2">
    <location>
        <begin position="684"/>
        <end position="707"/>
    </location>
</feature>
<feature type="zinc finger region" description="C2H2-type 11" evidence="2">
    <location>
        <begin position="713"/>
        <end position="735"/>
    </location>
</feature>
<feature type="zinc finger region" description="C2H2-type 12" evidence="2">
    <location>
        <begin position="741"/>
        <end position="764"/>
    </location>
</feature>
<feature type="zinc finger region" description="C2H2-type 13" evidence="2">
    <location>
        <begin position="770"/>
        <end position="792"/>
    </location>
</feature>
<feature type="modified residue" description="Phosphoserine" evidence="4 5">
    <location>
        <position position="269"/>
    </location>
</feature>
<gene>
    <name type="primary">Zfx</name>
</gene>